<evidence type="ECO:0000255" key="1">
    <source>
        <dbReference type="HAMAP-Rule" id="MF_01337"/>
    </source>
</evidence>
<evidence type="ECO:0000305" key="2"/>
<name>RL18_BURMA</name>
<organism>
    <name type="scientific">Burkholderia mallei (strain ATCC 23344)</name>
    <dbReference type="NCBI Taxonomy" id="243160"/>
    <lineage>
        <taxon>Bacteria</taxon>
        <taxon>Pseudomonadati</taxon>
        <taxon>Pseudomonadota</taxon>
        <taxon>Betaproteobacteria</taxon>
        <taxon>Burkholderiales</taxon>
        <taxon>Burkholderiaceae</taxon>
        <taxon>Burkholderia</taxon>
        <taxon>pseudomallei group</taxon>
    </lineage>
</organism>
<sequence length="121" mass="13062">MDKTQSRLRRARQTRIKIAELQVARLAVHRTNTHIYAQVFSPCGTKVLASASTLEAEVRAQLADKSGKGGNVAAATLIGKRIAEKAKAAGIESVAFDRSGFRYHGRVKALAEAAREAGLKF</sequence>
<feature type="chain" id="PRO_0000131235" description="Large ribosomal subunit protein uL18">
    <location>
        <begin position="1"/>
        <end position="121"/>
    </location>
</feature>
<keyword id="KW-1185">Reference proteome</keyword>
<keyword id="KW-0687">Ribonucleoprotein</keyword>
<keyword id="KW-0689">Ribosomal protein</keyword>
<keyword id="KW-0694">RNA-binding</keyword>
<keyword id="KW-0699">rRNA-binding</keyword>
<protein>
    <recommendedName>
        <fullName evidence="1">Large ribosomal subunit protein uL18</fullName>
    </recommendedName>
    <alternativeName>
        <fullName evidence="2">50S ribosomal protein L18</fullName>
    </alternativeName>
</protein>
<dbReference type="EMBL" id="CP000010">
    <property type="protein sequence ID" value="AAU47854.1"/>
    <property type="molecule type" value="Genomic_DNA"/>
</dbReference>
<dbReference type="RefSeq" id="WP_004197946.1">
    <property type="nucleotide sequence ID" value="NC_006348.1"/>
</dbReference>
<dbReference type="RefSeq" id="YP_104150.1">
    <property type="nucleotide sequence ID" value="NC_006348.1"/>
</dbReference>
<dbReference type="SMR" id="Q62GM1"/>
<dbReference type="GeneID" id="93061816"/>
<dbReference type="KEGG" id="bma:BMA2616"/>
<dbReference type="PATRIC" id="fig|243160.12.peg.2687"/>
<dbReference type="eggNOG" id="COG0256">
    <property type="taxonomic scope" value="Bacteria"/>
</dbReference>
<dbReference type="HOGENOM" id="CLU_098841_0_1_4"/>
<dbReference type="Proteomes" id="UP000006693">
    <property type="component" value="Chromosome 1"/>
</dbReference>
<dbReference type="GO" id="GO:0022625">
    <property type="term" value="C:cytosolic large ribosomal subunit"/>
    <property type="evidence" value="ECO:0007669"/>
    <property type="project" value="TreeGrafter"/>
</dbReference>
<dbReference type="GO" id="GO:0008097">
    <property type="term" value="F:5S rRNA binding"/>
    <property type="evidence" value="ECO:0007669"/>
    <property type="project" value="TreeGrafter"/>
</dbReference>
<dbReference type="GO" id="GO:0003735">
    <property type="term" value="F:structural constituent of ribosome"/>
    <property type="evidence" value="ECO:0007669"/>
    <property type="project" value="InterPro"/>
</dbReference>
<dbReference type="GO" id="GO:0006412">
    <property type="term" value="P:translation"/>
    <property type="evidence" value="ECO:0007669"/>
    <property type="project" value="UniProtKB-UniRule"/>
</dbReference>
<dbReference type="CDD" id="cd00432">
    <property type="entry name" value="Ribosomal_L18_L5e"/>
    <property type="match status" value="1"/>
</dbReference>
<dbReference type="FunFam" id="3.30.420.100:FF:000001">
    <property type="entry name" value="50S ribosomal protein L18"/>
    <property type="match status" value="1"/>
</dbReference>
<dbReference type="Gene3D" id="3.30.420.100">
    <property type="match status" value="1"/>
</dbReference>
<dbReference type="HAMAP" id="MF_01337_B">
    <property type="entry name" value="Ribosomal_uL18_B"/>
    <property type="match status" value="1"/>
</dbReference>
<dbReference type="InterPro" id="IPR004389">
    <property type="entry name" value="Ribosomal_uL18_bac-type"/>
</dbReference>
<dbReference type="InterPro" id="IPR005484">
    <property type="entry name" value="Ribosomal_uL18_bac/euk"/>
</dbReference>
<dbReference type="NCBIfam" id="TIGR00060">
    <property type="entry name" value="L18_bact"/>
    <property type="match status" value="1"/>
</dbReference>
<dbReference type="PANTHER" id="PTHR12899">
    <property type="entry name" value="39S RIBOSOMAL PROTEIN L18, MITOCHONDRIAL"/>
    <property type="match status" value="1"/>
</dbReference>
<dbReference type="PANTHER" id="PTHR12899:SF3">
    <property type="entry name" value="LARGE RIBOSOMAL SUBUNIT PROTEIN UL18M"/>
    <property type="match status" value="1"/>
</dbReference>
<dbReference type="Pfam" id="PF00861">
    <property type="entry name" value="Ribosomal_L18p"/>
    <property type="match status" value="1"/>
</dbReference>
<dbReference type="SUPFAM" id="SSF53137">
    <property type="entry name" value="Translational machinery components"/>
    <property type="match status" value="1"/>
</dbReference>
<proteinExistence type="inferred from homology"/>
<accession>Q62GM1</accession>
<gene>
    <name evidence="1" type="primary">rplR</name>
    <name type="ordered locus">BMA2616</name>
</gene>
<comment type="function">
    <text evidence="1">This is one of the proteins that bind and probably mediate the attachment of the 5S RNA into the large ribosomal subunit, where it forms part of the central protuberance.</text>
</comment>
<comment type="subunit">
    <text evidence="1">Part of the 50S ribosomal subunit; part of the 5S rRNA/L5/L18/L25 subcomplex. Contacts the 5S and 23S rRNAs.</text>
</comment>
<comment type="similarity">
    <text evidence="1">Belongs to the universal ribosomal protein uL18 family.</text>
</comment>
<reference key="1">
    <citation type="journal article" date="2004" name="Proc. Natl. Acad. Sci. U.S.A.">
        <title>Structural flexibility in the Burkholderia mallei genome.</title>
        <authorList>
            <person name="Nierman W.C."/>
            <person name="DeShazer D."/>
            <person name="Kim H.S."/>
            <person name="Tettelin H."/>
            <person name="Nelson K.E."/>
            <person name="Feldblyum T.V."/>
            <person name="Ulrich R.L."/>
            <person name="Ronning C.M."/>
            <person name="Brinkac L.M."/>
            <person name="Daugherty S.C."/>
            <person name="Davidsen T.D."/>
            <person name="DeBoy R.T."/>
            <person name="Dimitrov G."/>
            <person name="Dodson R.J."/>
            <person name="Durkin A.S."/>
            <person name="Gwinn M.L."/>
            <person name="Haft D.H."/>
            <person name="Khouri H.M."/>
            <person name="Kolonay J.F."/>
            <person name="Madupu R."/>
            <person name="Mohammoud Y."/>
            <person name="Nelson W.C."/>
            <person name="Radune D."/>
            <person name="Romero C.M."/>
            <person name="Sarria S."/>
            <person name="Selengut J."/>
            <person name="Shamblin C."/>
            <person name="Sullivan S.A."/>
            <person name="White O."/>
            <person name="Yu Y."/>
            <person name="Zafar N."/>
            <person name="Zhou L."/>
            <person name="Fraser C.M."/>
        </authorList>
    </citation>
    <scope>NUCLEOTIDE SEQUENCE [LARGE SCALE GENOMIC DNA]</scope>
    <source>
        <strain>ATCC 23344</strain>
    </source>
</reference>